<organism>
    <name type="scientific">Burkholderia thailandensis (strain ATCC 700388 / DSM 13276 / CCUG 48851 / CIP 106301 / E264)</name>
    <dbReference type="NCBI Taxonomy" id="271848"/>
    <lineage>
        <taxon>Bacteria</taxon>
        <taxon>Pseudomonadati</taxon>
        <taxon>Pseudomonadota</taxon>
        <taxon>Betaproteobacteria</taxon>
        <taxon>Burkholderiales</taxon>
        <taxon>Burkholderiaceae</taxon>
        <taxon>Burkholderia</taxon>
        <taxon>pseudomallei group</taxon>
    </lineage>
</organism>
<evidence type="ECO:0000255" key="1">
    <source>
        <dbReference type="HAMAP-Rule" id="MF_00446"/>
    </source>
</evidence>
<sequence>MQRHMLKSKIHRAAVTHCELHYEGSCAIDEDLLEAANIVENERIDIWNINNGERFSTYAIKGERGSGMISLNGSAARRAQLGDLVIIAAFAMIDEEELKAGWKPDLVFVDEGNKIKGSRDHVPTQNWT</sequence>
<keyword id="KW-0068">Autocatalytic cleavage</keyword>
<keyword id="KW-0963">Cytoplasm</keyword>
<keyword id="KW-0210">Decarboxylase</keyword>
<keyword id="KW-0456">Lyase</keyword>
<keyword id="KW-0566">Pantothenate biosynthesis</keyword>
<keyword id="KW-0670">Pyruvate</keyword>
<keyword id="KW-0704">Schiff base</keyword>
<keyword id="KW-0865">Zymogen</keyword>
<feature type="chain" id="PRO_0000236857" description="Aspartate 1-decarboxylase beta chain" evidence="1">
    <location>
        <begin position="1"/>
        <end position="24"/>
    </location>
</feature>
<feature type="chain" id="PRO_0000236858" description="Aspartate 1-decarboxylase alpha chain" evidence="1">
    <location>
        <begin position="25"/>
        <end position="128"/>
    </location>
</feature>
<feature type="active site" description="Schiff-base intermediate with substrate; via pyruvic acid" evidence="1">
    <location>
        <position position="25"/>
    </location>
</feature>
<feature type="active site" description="Proton donor" evidence="1">
    <location>
        <position position="58"/>
    </location>
</feature>
<feature type="binding site" evidence="1">
    <location>
        <position position="57"/>
    </location>
    <ligand>
        <name>substrate</name>
    </ligand>
</feature>
<feature type="binding site" evidence="1">
    <location>
        <begin position="73"/>
        <end position="75"/>
    </location>
    <ligand>
        <name>substrate</name>
    </ligand>
</feature>
<feature type="modified residue" description="Pyruvic acid (Ser)" evidence="1">
    <location>
        <position position="25"/>
    </location>
</feature>
<proteinExistence type="inferred from homology"/>
<dbReference type="EC" id="4.1.1.11" evidence="1"/>
<dbReference type="EMBL" id="CP000086">
    <property type="protein sequence ID" value="ABC38409.1"/>
    <property type="molecule type" value="Genomic_DNA"/>
</dbReference>
<dbReference type="RefSeq" id="WP_009892492.1">
    <property type="nucleotide sequence ID" value="NZ_CP008785.1"/>
</dbReference>
<dbReference type="SMR" id="Q2T096"/>
<dbReference type="GeneID" id="45120603"/>
<dbReference type="KEGG" id="bte:BTH_I0847"/>
<dbReference type="HOGENOM" id="CLU_115305_2_1_4"/>
<dbReference type="UniPathway" id="UPA00028">
    <property type="reaction ID" value="UER00002"/>
</dbReference>
<dbReference type="Proteomes" id="UP000001930">
    <property type="component" value="Chromosome I"/>
</dbReference>
<dbReference type="GO" id="GO:0005829">
    <property type="term" value="C:cytosol"/>
    <property type="evidence" value="ECO:0007669"/>
    <property type="project" value="TreeGrafter"/>
</dbReference>
<dbReference type="GO" id="GO:0004068">
    <property type="term" value="F:aspartate 1-decarboxylase activity"/>
    <property type="evidence" value="ECO:0007669"/>
    <property type="project" value="UniProtKB-UniRule"/>
</dbReference>
<dbReference type="GO" id="GO:0006523">
    <property type="term" value="P:alanine biosynthetic process"/>
    <property type="evidence" value="ECO:0007669"/>
    <property type="project" value="InterPro"/>
</dbReference>
<dbReference type="GO" id="GO:0015940">
    <property type="term" value="P:pantothenate biosynthetic process"/>
    <property type="evidence" value="ECO:0007669"/>
    <property type="project" value="UniProtKB-UniRule"/>
</dbReference>
<dbReference type="CDD" id="cd06919">
    <property type="entry name" value="Asp_decarbox"/>
    <property type="match status" value="1"/>
</dbReference>
<dbReference type="Gene3D" id="2.40.40.20">
    <property type="match status" value="1"/>
</dbReference>
<dbReference type="HAMAP" id="MF_00446">
    <property type="entry name" value="PanD"/>
    <property type="match status" value="1"/>
</dbReference>
<dbReference type="InterPro" id="IPR009010">
    <property type="entry name" value="Asp_de-COase-like_dom_sf"/>
</dbReference>
<dbReference type="InterPro" id="IPR003190">
    <property type="entry name" value="Asp_decarbox"/>
</dbReference>
<dbReference type="NCBIfam" id="TIGR00223">
    <property type="entry name" value="panD"/>
    <property type="match status" value="1"/>
</dbReference>
<dbReference type="PANTHER" id="PTHR21012">
    <property type="entry name" value="ASPARTATE 1-DECARBOXYLASE"/>
    <property type="match status" value="1"/>
</dbReference>
<dbReference type="PANTHER" id="PTHR21012:SF0">
    <property type="entry name" value="ASPARTATE 1-DECARBOXYLASE"/>
    <property type="match status" value="1"/>
</dbReference>
<dbReference type="Pfam" id="PF02261">
    <property type="entry name" value="Asp_decarbox"/>
    <property type="match status" value="1"/>
</dbReference>
<dbReference type="PIRSF" id="PIRSF006246">
    <property type="entry name" value="Asp_decarbox"/>
    <property type="match status" value="1"/>
</dbReference>
<dbReference type="SUPFAM" id="SSF50692">
    <property type="entry name" value="ADC-like"/>
    <property type="match status" value="1"/>
</dbReference>
<gene>
    <name evidence="1" type="primary">panD</name>
    <name type="ordered locus">BTH_I0847</name>
</gene>
<protein>
    <recommendedName>
        <fullName evidence="1">Aspartate 1-decarboxylase</fullName>
        <ecNumber evidence="1">4.1.1.11</ecNumber>
    </recommendedName>
    <alternativeName>
        <fullName evidence="1">Aspartate alpha-decarboxylase</fullName>
    </alternativeName>
    <component>
        <recommendedName>
            <fullName evidence="1">Aspartate 1-decarboxylase beta chain</fullName>
        </recommendedName>
    </component>
    <component>
        <recommendedName>
            <fullName evidence="1">Aspartate 1-decarboxylase alpha chain</fullName>
        </recommendedName>
    </component>
</protein>
<comment type="function">
    <text evidence="1">Catalyzes the pyruvoyl-dependent decarboxylation of aspartate to produce beta-alanine.</text>
</comment>
<comment type="catalytic activity">
    <reaction evidence="1">
        <text>L-aspartate + H(+) = beta-alanine + CO2</text>
        <dbReference type="Rhea" id="RHEA:19497"/>
        <dbReference type="ChEBI" id="CHEBI:15378"/>
        <dbReference type="ChEBI" id="CHEBI:16526"/>
        <dbReference type="ChEBI" id="CHEBI:29991"/>
        <dbReference type="ChEBI" id="CHEBI:57966"/>
        <dbReference type="EC" id="4.1.1.11"/>
    </reaction>
</comment>
<comment type="cofactor">
    <cofactor evidence="1">
        <name>pyruvate</name>
        <dbReference type="ChEBI" id="CHEBI:15361"/>
    </cofactor>
    <text evidence="1">Binds 1 pyruvoyl group covalently per subunit.</text>
</comment>
<comment type="pathway">
    <text evidence="1">Cofactor biosynthesis; (R)-pantothenate biosynthesis; beta-alanine from L-aspartate: step 1/1.</text>
</comment>
<comment type="subunit">
    <text evidence="1">Heterooctamer of four alpha and four beta subunits.</text>
</comment>
<comment type="subcellular location">
    <subcellularLocation>
        <location evidence="1">Cytoplasm</location>
    </subcellularLocation>
</comment>
<comment type="PTM">
    <text evidence="1">Is synthesized initially as an inactive proenzyme, which is activated by self-cleavage at a specific serine bond to produce a beta-subunit with a hydroxyl group at its C-terminus and an alpha-subunit with a pyruvoyl group at its N-terminus.</text>
</comment>
<comment type="similarity">
    <text evidence="1">Belongs to the PanD family.</text>
</comment>
<reference key="1">
    <citation type="journal article" date="2005" name="BMC Genomics">
        <title>Bacterial genome adaptation to niches: divergence of the potential virulence genes in three Burkholderia species of different survival strategies.</title>
        <authorList>
            <person name="Kim H.S."/>
            <person name="Schell M.A."/>
            <person name="Yu Y."/>
            <person name="Ulrich R.L."/>
            <person name="Sarria S.H."/>
            <person name="Nierman W.C."/>
            <person name="DeShazer D."/>
        </authorList>
    </citation>
    <scope>NUCLEOTIDE SEQUENCE [LARGE SCALE GENOMIC DNA]</scope>
    <source>
        <strain>ATCC 700388 / DSM 13276 / CCUG 48851 / CIP 106301 / E264</strain>
    </source>
</reference>
<accession>Q2T096</accession>
<name>PAND_BURTA</name>